<organism>
    <name type="scientific">Methanococcus vannielii (strain ATCC 35089 / DSM 1224 / JCM 13029 / OCM 148 / SB)</name>
    <dbReference type="NCBI Taxonomy" id="406327"/>
    <lineage>
        <taxon>Archaea</taxon>
        <taxon>Methanobacteriati</taxon>
        <taxon>Methanobacteriota</taxon>
        <taxon>Methanomada group</taxon>
        <taxon>Methanococci</taxon>
        <taxon>Methanococcales</taxon>
        <taxon>Methanococcaceae</taxon>
        <taxon>Methanococcus</taxon>
    </lineage>
</organism>
<name>APGM_METVS</name>
<accession>A6UQ84</accession>
<evidence type="ECO:0000255" key="1">
    <source>
        <dbReference type="HAMAP-Rule" id="MF_01402"/>
    </source>
</evidence>
<proteinExistence type="inferred from homology"/>
<feature type="chain" id="PRO_1000087367" description="2,3-bisphosphoglycerate-independent phosphoglycerate mutase">
    <location>
        <begin position="1"/>
        <end position="406"/>
    </location>
</feature>
<dbReference type="EC" id="5.4.2.12" evidence="1"/>
<dbReference type="EMBL" id="CP000742">
    <property type="protein sequence ID" value="ABR54656.1"/>
    <property type="molecule type" value="Genomic_DNA"/>
</dbReference>
<dbReference type="RefSeq" id="WP_011972558.1">
    <property type="nucleotide sequence ID" value="NC_009634.1"/>
</dbReference>
<dbReference type="SMR" id="A6UQ84"/>
<dbReference type="STRING" id="406327.Mevan_0750"/>
<dbReference type="GeneID" id="5325430"/>
<dbReference type="KEGG" id="mvn:Mevan_0750"/>
<dbReference type="eggNOG" id="arCOG01696">
    <property type="taxonomic scope" value="Archaea"/>
</dbReference>
<dbReference type="HOGENOM" id="CLU_034906_2_0_2"/>
<dbReference type="OrthoDB" id="52918at2157"/>
<dbReference type="UniPathway" id="UPA00109">
    <property type="reaction ID" value="UER00186"/>
</dbReference>
<dbReference type="Proteomes" id="UP000001107">
    <property type="component" value="Chromosome"/>
</dbReference>
<dbReference type="GO" id="GO:0046872">
    <property type="term" value="F:metal ion binding"/>
    <property type="evidence" value="ECO:0007669"/>
    <property type="project" value="InterPro"/>
</dbReference>
<dbReference type="GO" id="GO:0004619">
    <property type="term" value="F:phosphoglycerate mutase activity"/>
    <property type="evidence" value="ECO:0007669"/>
    <property type="project" value="UniProtKB-EC"/>
</dbReference>
<dbReference type="GO" id="GO:0006096">
    <property type="term" value="P:glycolytic process"/>
    <property type="evidence" value="ECO:0007669"/>
    <property type="project" value="UniProtKB-UniRule"/>
</dbReference>
<dbReference type="CDD" id="cd16011">
    <property type="entry name" value="iPGM_like"/>
    <property type="match status" value="1"/>
</dbReference>
<dbReference type="Gene3D" id="3.40.720.10">
    <property type="entry name" value="Alkaline Phosphatase, subunit A"/>
    <property type="match status" value="2"/>
</dbReference>
<dbReference type="HAMAP" id="MF_01402_A">
    <property type="entry name" value="ApgM_A"/>
    <property type="match status" value="1"/>
</dbReference>
<dbReference type="InterPro" id="IPR017850">
    <property type="entry name" value="Alkaline_phosphatase_core_sf"/>
</dbReference>
<dbReference type="InterPro" id="IPR023665">
    <property type="entry name" value="ApgAM_prokaryotes"/>
</dbReference>
<dbReference type="InterPro" id="IPR006124">
    <property type="entry name" value="Metalloenzyme"/>
</dbReference>
<dbReference type="InterPro" id="IPR004456">
    <property type="entry name" value="Pglycerate_mutase_ApgM"/>
</dbReference>
<dbReference type="NCBIfam" id="TIGR00306">
    <property type="entry name" value="apgM"/>
    <property type="match status" value="1"/>
</dbReference>
<dbReference type="NCBIfam" id="NF003104">
    <property type="entry name" value="PRK04024.1"/>
    <property type="match status" value="1"/>
</dbReference>
<dbReference type="PANTHER" id="PTHR31209">
    <property type="entry name" value="COFACTOR-INDEPENDENT PHOSPHOGLYCERATE MUTASE"/>
    <property type="match status" value="1"/>
</dbReference>
<dbReference type="PANTHER" id="PTHR31209:SF0">
    <property type="entry name" value="METALLOENZYME DOMAIN-CONTAINING PROTEIN"/>
    <property type="match status" value="1"/>
</dbReference>
<dbReference type="Pfam" id="PF01676">
    <property type="entry name" value="Metalloenzyme"/>
    <property type="match status" value="1"/>
</dbReference>
<dbReference type="Pfam" id="PF10143">
    <property type="entry name" value="PhosphMutase"/>
    <property type="match status" value="1"/>
</dbReference>
<dbReference type="PIRSF" id="PIRSF006392">
    <property type="entry name" value="IPGAM_arch"/>
    <property type="match status" value="1"/>
</dbReference>
<dbReference type="SUPFAM" id="SSF53649">
    <property type="entry name" value="Alkaline phosphatase-like"/>
    <property type="match status" value="1"/>
</dbReference>
<sequence length="406" mass="44562">MKAVIFVIDGLGDRPDEFGNTPLKEANTHTMDKIAKEGICGIMNAIDIGVRPGSDTAHLALLGYDPYETYTGRGPFEACGVGITVKPGDIAFRCNFSSVDKEFIVTDRRAGRIEDTSLLEKELDGLKIDDVEVIFKESGGYRAALLLRGPNLSDKISDADPKKEGKKVKEIIPLDDSKEAEKTANILNRLLKVAYEKLDGHPVNQKRRTNNLPVANMIIPRGVGKVPEIIPFDKKYGLKGACIAGTGLIKGIAKMVNLDVIEVKGATGTPDSNFMAKAKALVETLKTHDFVLINVKGADEAGHDGNYEVKKQVIEKIDEMLTYIMENIDRKDVYFVLTGDHSTPIEEMDHSADPLPIVIWGKSVRVDDVEKFDEFSTCKGGLNWIKGKNIMPILIDLMGLSKKYGA</sequence>
<comment type="function">
    <text evidence="1">Catalyzes the interconversion of 2-phosphoglycerate and 3-phosphoglycerate.</text>
</comment>
<comment type="catalytic activity">
    <reaction evidence="1">
        <text>(2R)-2-phosphoglycerate = (2R)-3-phosphoglycerate</text>
        <dbReference type="Rhea" id="RHEA:15901"/>
        <dbReference type="ChEBI" id="CHEBI:58272"/>
        <dbReference type="ChEBI" id="CHEBI:58289"/>
        <dbReference type="EC" id="5.4.2.12"/>
    </reaction>
</comment>
<comment type="pathway">
    <text evidence="1">Carbohydrate degradation; glycolysis; pyruvate from D-glyceraldehyde 3-phosphate: step 3/5.</text>
</comment>
<comment type="similarity">
    <text evidence="1">Belongs to the BPG-independent phosphoglycerate mutase family. A-PGAM subfamily.</text>
</comment>
<protein>
    <recommendedName>
        <fullName evidence="1">2,3-bisphosphoglycerate-independent phosphoglycerate mutase</fullName>
        <shortName evidence="1">BPG-independent PGAM</shortName>
        <shortName evidence="1">Phosphoglyceromutase</shortName>
        <shortName evidence="1">aPGAM</shortName>
        <ecNumber evidence="1">5.4.2.12</ecNumber>
    </recommendedName>
</protein>
<keyword id="KW-0324">Glycolysis</keyword>
<keyword id="KW-0413">Isomerase</keyword>
<reference key="1">
    <citation type="submission" date="2007-06" db="EMBL/GenBank/DDBJ databases">
        <title>Complete sequence of Methanococcus vannielii SB.</title>
        <authorList>
            <consortium name="US DOE Joint Genome Institute"/>
            <person name="Copeland A."/>
            <person name="Lucas S."/>
            <person name="Lapidus A."/>
            <person name="Barry K."/>
            <person name="Glavina del Rio T."/>
            <person name="Dalin E."/>
            <person name="Tice H."/>
            <person name="Pitluck S."/>
            <person name="Chain P."/>
            <person name="Malfatti S."/>
            <person name="Shin M."/>
            <person name="Vergez L."/>
            <person name="Schmutz J."/>
            <person name="Larimer F."/>
            <person name="Land M."/>
            <person name="Hauser L."/>
            <person name="Kyrpides N."/>
            <person name="Anderson I."/>
            <person name="Sieprawska-Lupa M."/>
            <person name="Whitman W.B."/>
            <person name="Richardson P."/>
        </authorList>
    </citation>
    <scope>NUCLEOTIDE SEQUENCE [LARGE SCALE GENOMIC DNA]</scope>
    <source>
        <strain>ATCC 35089 / DSM 1224 / JCM 13029 / OCM 148 / SB</strain>
    </source>
</reference>
<gene>
    <name evidence="1" type="primary">apgM</name>
    <name type="ordered locus">Mevan_0750</name>
</gene>